<accession>O36054</accession>
<dbReference type="EMBL" id="Z68249">
    <property type="protein sequence ID" value="CAA92547.1"/>
    <property type="molecule type" value="Genomic_DNA"/>
</dbReference>
<dbReference type="SMR" id="O36054"/>
<dbReference type="GO" id="GO:0009507">
    <property type="term" value="C:chloroplast"/>
    <property type="evidence" value="ECO:0007669"/>
    <property type="project" value="UniProtKB-SubCell"/>
</dbReference>
<dbReference type="GO" id="GO:0015935">
    <property type="term" value="C:small ribosomal subunit"/>
    <property type="evidence" value="ECO:0007669"/>
    <property type="project" value="InterPro"/>
</dbReference>
<dbReference type="GO" id="GO:0019843">
    <property type="term" value="F:rRNA binding"/>
    <property type="evidence" value="ECO:0007669"/>
    <property type="project" value="UniProtKB-KW"/>
</dbReference>
<dbReference type="GO" id="GO:0003735">
    <property type="term" value="F:structural constituent of ribosome"/>
    <property type="evidence" value="ECO:0007669"/>
    <property type="project" value="InterPro"/>
</dbReference>
<dbReference type="GO" id="GO:0042274">
    <property type="term" value="P:ribosomal small subunit biogenesis"/>
    <property type="evidence" value="ECO:0007669"/>
    <property type="project" value="TreeGrafter"/>
</dbReference>
<dbReference type="GO" id="GO:0006412">
    <property type="term" value="P:translation"/>
    <property type="evidence" value="ECO:0007669"/>
    <property type="project" value="InterPro"/>
</dbReference>
<dbReference type="CDD" id="cd00165">
    <property type="entry name" value="S4"/>
    <property type="match status" value="1"/>
</dbReference>
<dbReference type="FunFam" id="1.10.1050.10:FF:000002">
    <property type="entry name" value="30S ribosomal protein S4, chloroplastic"/>
    <property type="match status" value="1"/>
</dbReference>
<dbReference type="FunFam" id="3.10.290.10:FF:000081">
    <property type="entry name" value="30S ribosomal protein S4, chloroplastic"/>
    <property type="match status" value="1"/>
</dbReference>
<dbReference type="Gene3D" id="1.10.1050.10">
    <property type="entry name" value="Ribosomal Protein S4 Delta 41, Chain A, domain 1"/>
    <property type="match status" value="1"/>
</dbReference>
<dbReference type="Gene3D" id="3.10.290.10">
    <property type="entry name" value="RNA-binding S4 domain"/>
    <property type="match status" value="1"/>
</dbReference>
<dbReference type="HAMAP" id="MF_01306_B">
    <property type="entry name" value="Ribosomal_uS4_B"/>
    <property type="match status" value="1"/>
</dbReference>
<dbReference type="InterPro" id="IPR022801">
    <property type="entry name" value="Ribosomal_uS4"/>
</dbReference>
<dbReference type="InterPro" id="IPR005709">
    <property type="entry name" value="Ribosomal_uS4_bac-type"/>
</dbReference>
<dbReference type="InterPro" id="IPR018079">
    <property type="entry name" value="Ribosomal_uS4_CS"/>
</dbReference>
<dbReference type="InterPro" id="IPR001912">
    <property type="entry name" value="Ribosomal_uS4_N"/>
</dbReference>
<dbReference type="InterPro" id="IPR002942">
    <property type="entry name" value="S4_RNA-bd"/>
</dbReference>
<dbReference type="InterPro" id="IPR036986">
    <property type="entry name" value="S4_RNA-bd_sf"/>
</dbReference>
<dbReference type="NCBIfam" id="NF003717">
    <property type="entry name" value="PRK05327.1"/>
    <property type="match status" value="1"/>
</dbReference>
<dbReference type="NCBIfam" id="TIGR01017">
    <property type="entry name" value="rpsD_bact"/>
    <property type="match status" value="1"/>
</dbReference>
<dbReference type="PANTHER" id="PTHR11831">
    <property type="entry name" value="30S 40S RIBOSOMAL PROTEIN"/>
    <property type="match status" value="1"/>
</dbReference>
<dbReference type="PANTHER" id="PTHR11831:SF4">
    <property type="entry name" value="SMALL RIBOSOMAL SUBUNIT PROTEIN US4M"/>
    <property type="match status" value="1"/>
</dbReference>
<dbReference type="Pfam" id="PF00163">
    <property type="entry name" value="Ribosomal_S4"/>
    <property type="match status" value="1"/>
</dbReference>
<dbReference type="Pfam" id="PF01479">
    <property type="entry name" value="S4"/>
    <property type="match status" value="1"/>
</dbReference>
<dbReference type="SMART" id="SM01390">
    <property type="entry name" value="Ribosomal_S4"/>
    <property type="match status" value="1"/>
</dbReference>
<dbReference type="SMART" id="SM00363">
    <property type="entry name" value="S4"/>
    <property type="match status" value="1"/>
</dbReference>
<dbReference type="SUPFAM" id="SSF55174">
    <property type="entry name" value="Alpha-L RNA-binding motif"/>
    <property type="match status" value="1"/>
</dbReference>
<dbReference type="PROSITE" id="PS00632">
    <property type="entry name" value="RIBOSOMAL_S4"/>
    <property type="match status" value="1"/>
</dbReference>
<dbReference type="PROSITE" id="PS50889">
    <property type="entry name" value="S4"/>
    <property type="match status" value="1"/>
</dbReference>
<reference key="1">
    <citation type="journal article" date="1997" name="Plant Syst. Evol.">
        <title>Phylogenetic analysis of Iridaceae with parsimony and distance methods using the plastid gene rps4.</title>
        <authorList>
            <person name="Souza-Chies T.T."/>
            <person name="Bittar G."/>
            <person name="Nadot S."/>
            <person name="Carter L."/>
            <person name="Besin E."/>
            <person name="Lejeune B.P."/>
        </authorList>
    </citation>
    <scope>NUCLEOTIDE SEQUENCE [GENOMIC DNA]</scope>
</reference>
<keyword id="KW-0150">Chloroplast</keyword>
<keyword id="KW-0934">Plastid</keyword>
<keyword id="KW-0687">Ribonucleoprotein</keyword>
<keyword id="KW-0689">Ribosomal protein</keyword>
<keyword id="KW-0694">RNA-binding</keyword>
<keyword id="KW-0699">rRNA-binding</keyword>
<protein>
    <recommendedName>
        <fullName evidence="2">Small ribosomal subunit protein uS4c</fullName>
    </recommendedName>
    <alternativeName>
        <fullName>30S ribosomal protein S4, chloroplastic</fullName>
    </alternativeName>
</protein>
<organism>
    <name type="scientific">Sparaxis sp. (strain Lejeune 1997)</name>
    <dbReference type="NCBI Taxonomy" id="58975"/>
    <lineage>
        <taxon>Eukaryota</taxon>
        <taxon>Viridiplantae</taxon>
        <taxon>Streptophyta</taxon>
        <taxon>Embryophyta</taxon>
        <taxon>Tracheophyta</taxon>
        <taxon>Spermatophyta</taxon>
        <taxon>Magnoliopsida</taxon>
        <taxon>Liliopsida</taxon>
        <taxon>Asparagales</taxon>
        <taxon>Iridaceae</taxon>
        <taxon>Crocoideae</taxon>
        <taxon>Croceae</taxon>
        <taxon>Sparaxis</taxon>
    </lineage>
</organism>
<comment type="function">
    <text evidence="1">One of the primary rRNA binding proteins, it binds directly to 16S rRNA where it nucleates assembly of the body of the 30S subunit.</text>
</comment>
<comment type="function">
    <text evidence="1">With S5 and S12 plays an important role in translational accuracy.</text>
</comment>
<comment type="subunit">
    <text evidence="1">Part of the 30S ribosomal subunit. Contacts protein S5. The interaction surface between S4 and S5 is involved in control of translational fidelity (By similarity).</text>
</comment>
<comment type="subcellular location">
    <subcellularLocation>
        <location>Plastid</location>
        <location>Chloroplast</location>
    </subcellularLocation>
</comment>
<comment type="similarity">
    <text evidence="2">Belongs to the universal ribosomal protein uS4 family.</text>
</comment>
<gene>
    <name type="primary">rps4</name>
</gene>
<sequence length="183" mass="21104">RFKKIRRLGALPGLTSKRPRSGSDLKNQLRSGKRSQYRIRLEEKQKLRFHYGLTERQLLKYVHIAGKAKGSTGQILLQLLEMRLDNILFRLGMASTIPGARQLVNHRHILVNGRIVDIPSYRCKPRDIITTKNKQRSKALIQNFIASSPHQEELPNHLTIDPLQYKGLVNQIIDSKWIGLKIN</sequence>
<geneLocation type="chloroplast"/>
<feature type="chain" id="PRO_0000132667" description="Small ribosomal subunit protein uS4c">
    <location>
        <begin position="1" status="less than"/>
        <end position="183" status="greater than"/>
    </location>
</feature>
<feature type="domain" description="S4 RNA-binding">
    <location>
        <begin position="82"/>
        <end position="143"/>
    </location>
</feature>
<feature type="non-terminal residue">
    <location>
        <position position="1"/>
    </location>
</feature>
<feature type="non-terminal residue">
    <location>
        <position position="183"/>
    </location>
</feature>
<evidence type="ECO:0000250" key="1"/>
<evidence type="ECO:0000305" key="2"/>
<proteinExistence type="inferred from homology"/>
<name>RR4_SPASP</name>